<keyword id="KW-0150">Chloroplast</keyword>
<keyword id="KW-0472">Membrane</keyword>
<keyword id="KW-0602">Photosynthesis</keyword>
<keyword id="KW-0604">Photosystem II</keyword>
<keyword id="KW-0934">Plastid</keyword>
<keyword id="KW-0674">Reaction center</keyword>
<keyword id="KW-0793">Thylakoid</keyword>
<keyword id="KW-0812">Transmembrane</keyword>
<keyword id="KW-1133">Transmembrane helix</keyword>
<geneLocation type="chloroplast"/>
<name>PSBI_OENBI</name>
<feature type="chain" id="PRO_0000353241" description="Photosystem II reaction center protein I">
    <location>
        <begin position="1"/>
        <end position="36"/>
    </location>
</feature>
<feature type="transmembrane region" description="Helical" evidence="1">
    <location>
        <begin position="4"/>
        <end position="24"/>
    </location>
</feature>
<reference key="1">
    <citation type="journal article" date="2008" name="Nucleic Acids Res.">
        <title>The complete nucleotide sequences of the five genetically distinct plastid genomes of Oenothera, subsection Oenothera: I. Sequence evaluation and plastome evolution.</title>
        <authorList>
            <person name="Greiner S."/>
            <person name="Wang X."/>
            <person name="Rauwolf U."/>
            <person name="Silber M.V."/>
            <person name="Mayer K."/>
            <person name="Meurer J."/>
            <person name="Haberer G."/>
            <person name="Herrmann R.G."/>
        </authorList>
    </citation>
    <scope>NUCLEOTIDE SEQUENCE [LARGE SCALE GENOMIC DNA]</scope>
    <source>
        <strain>cv. Suaveolens Grado</strain>
    </source>
</reference>
<comment type="function">
    <text evidence="1">One of the components of the core complex of photosystem II (PSII), required for its stability and/or assembly. PSII is a light-driven water:plastoquinone oxidoreductase that uses light energy to abstract electrons from H(2)O, generating O(2) and a proton gradient subsequently used for ATP formation. It consists of a core antenna complex that captures photons, and an electron transfer chain that converts photonic excitation into a charge separation.</text>
</comment>
<comment type="subunit">
    <text evidence="1">PSII is composed of 1 copy each of membrane proteins PsbA, PsbB, PsbC, PsbD, PsbE, PsbF, PsbH, PsbI, PsbJ, PsbK, PsbL, PsbM, PsbT, PsbX, PsbY, PsbZ, Psb30/Ycf12, at least 3 peripheral proteins of the oxygen-evolving complex and a large number of cofactors. It forms dimeric complexes.</text>
</comment>
<comment type="subcellular location">
    <subcellularLocation>
        <location evidence="1">Plastid</location>
        <location evidence="1">Chloroplast thylakoid membrane</location>
        <topology evidence="1">Single-pass membrane protein</topology>
    </subcellularLocation>
</comment>
<comment type="similarity">
    <text evidence="1">Belongs to the PsbI family.</text>
</comment>
<evidence type="ECO:0000255" key="1">
    <source>
        <dbReference type="HAMAP-Rule" id="MF_01316"/>
    </source>
</evidence>
<protein>
    <recommendedName>
        <fullName evidence="1">Photosystem II reaction center protein I</fullName>
        <shortName evidence="1">PSII-I</shortName>
    </recommendedName>
    <alternativeName>
        <fullName evidence="1">PSII 4.8 kDa protein</fullName>
    </alternativeName>
</protein>
<gene>
    <name evidence="1" type="primary">psbI</name>
</gene>
<organism>
    <name type="scientific">Oenothera biennis</name>
    <name type="common">German evening primrose</name>
    <name type="synonym">Onagra biennis</name>
    <dbReference type="NCBI Taxonomy" id="3942"/>
    <lineage>
        <taxon>Eukaryota</taxon>
        <taxon>Viridiplantae</taxon>
        <taxon>Streptophyta</taxon>
        <taxon>Embryophyta</taxon>
        <taxon>Tracheophyta</taxon>
        <taxon>Spermatophyta</taxon>
        <taxon>Magnoliopsida</taxon>
        <taxon>eudicotyledons</taxon>
        <taxon>Gunneridae</taxon>
        <taxon>Pentapetalae</taxon>
        <taxon>rosids</taxon>
        <taxon>malvids</taxon>
        <taxon>Myrtales</taxon>
        <taxon>Onagraceae</taxon>
        <taxon>Onagroideae</taxon>
        <taxon>Onagreae</taxon>
        <taxon>Oenothera</taxon>
    </lineage>
</organism>
<dbReference type="EMBL" id="EU262889">
    <property type="protein sequence ID" value="ABW98879.1"/>
    <property type="molecule type" value="Genomic_DNA"/>
</dbReference>
<dbReference type="RefSeq" id="YP_001687374.1">
    <property type="nucleotide sequence ID" value="NC_010361.1"/>
</dbReference>
<dbReference type="SMR" id="B0Z4W7"/>
<dbReference type="GeneID" id="5952056"/>
<dbReference type="GO" id="GO:0009535">
    <property type="term" value="C:chloroplast thylakoid membrane"/>
    <property type="evidence" value="ECO:0007669"/>
    <property type="project" value="UniProtKB-SubCell"/>
</dbReference>
<dbReference type="GO" id="GO:0009539">
    <property type="term" value="C:photosystem II reaction center"/>
    <property type="evidence" value="ECO:0007669"/>
    <property type="project" value="InterPro"/>
</dbReference>
<dbReference type="GO" id="GO:0015979">
    <property type="term" value="P:photosynthesis"/>
    <property type="evidence" value="ECO:0007669"/>
    <property type="project" value="UniProtKB-UniRule"/>
</dbReference>
<dbReference type="HAMAP" id="MF_01316">
    <property type="entry name" value="PSII_PsbI"/>
    <property type="match status" value="1"/>
</dbReference>
<dbReference type="InterPro" id="IPR003686">
    <property type="entry name" value="PSII_PsbI"/>
</dbReference>
<dbReference type="InterPro" id="IPR037271">
    <property type="entry name" value="PSII_PsbI_sf"/>
</dbReference>
<dbReference type="NCBIfam" id="NF002735">
    <property type="entry name" value="PRK02655.1"/>
    <property type="match status" value="1"/>
</dbReference>
<dbReference type="PANTHER" id="PTHR35772">
    <property type="entry name" value="PHOTOSYSTEM II REACTION CENTER PROTEIN I"/>
    <property type="match status" value="1"/>
</dbReference>
<dbReference type="PANTHER" id="PTHR35772:SF1">
    <property type="entry name" value="PHOTOSYSTEM II REACTION CENTER PROTEIN I"/>
    <property type="match status" value="1"/>
</dbReference>
<dbReference type="Pfam" id="PF02532">
    <property type="entry name" value="PsbI"/>
    <property type="match status" value="1"/>
</dbReference>
<dbReference type="SUPFAM" id="SSF161041">
    <property type="entry name" value="Photosystem II reaction center protein I, PsbI"/>
    <property type="match status" value="1"/>
</dbReference>
<accession>B0Z4W7</accession>
<proteinExistence type="inferred from homology"/>
<sequence>MLTLKLFVYTVVIFFVSLFIFGFLSNDPGRNPGREE</sequence>